<name>RS16_ECO57</name>
<reference key="1">
    <citation type="journal article" date="2001" name="Nature">
        <title>Genome sequence of enterohaemorrhagic Escherichia coli O157:H7.</title>
        <authorList>
            <person name="Perna N.T."/>
            <person name="Plunkett G. III"/>
            <person name="Burland V."/>
            <person name="Mau B."/>
            <person name="Glasner J.D."/>
            <person name="Rose D.J."/>
            <person name="Mayhew G.F."/>
            <person name="Evans P.S."/>
            <person name="Gregor J."/>
            <person name="Kirkpatrick H.A."/>
            <person name="Posfai G."/>
            <person name="Hackett J."/>
            <person name="Klink S."/>
            <person name="Boutin A."/>
            <person name="Shao Y."/>
            <person name="Miller L."/>
            <person name="Grotbeck E.J."/>
            <person name="Davis N.W."/>
            <person name="Lim A."/>
            <person name="Dimalanta E.T."/>
            <person name="Potamousis K."/>
            <person name="Apodaca J."/>
            <person name="Anantharaman T.S."/>
            <person name="Lin J."/>
            <person name="Yen G."/>
            <person name="Schwartz D.C."/>
            <person name="Welch R.A."/>
            <person name="Blattner F.R."/>
        </authorList>
    </citation>
    <scope>NUCLEOTIDE SEQUENCE [LARGE SCALE GENOMIC DNA]</scope>
    <source>
        <strain>O157:H7 / EDL933 / ATCC 700927 / EHEC</strain>
    </source>
</reference>
<reference key="2">
    <citation type="journal article" date="2001" name="DNA Res.">
        <title>Complete genome sequence of enterohemorrhagic Escherichia coli O157:H7 and genomic comparison with a laboratory strain K-12.</title>
        <authorList>
            <person name="Hayashi T."/>
            <person name="Makino K."/>
            <person name="Ohnishi M."/>
            <person name="Kurokawa K."/>
            <person name="Ishii K."/>
            <person name="Yokoyama K."/>
            <person name="Han C.-G."/>
            <person name="Ohtsubo E."/>
            <person name="Nakayama K."/>
            <person name="Murata T."/>
            <person name="Tanaka M."/>
            <person name="Tobe T."/>
            <person name="Iida T."/>
            <person name="Takami H."/>
            <person name="Honda T."/>
            <person name="Sasakawa C."/>
            <person name="Ogasawara N."/>
            <person name="Yasunaga T."/>
            <person name="Kuhara S."/>
            <person name="Shiba T."/>
            <person name="Hattori M."/>
            <person name="Shinagawa H."/>
        </authorList>
    </citation>
    <scope>NUCLEOTIDE SEQUENCE [LARGE SCALE GENOMIC DNA]</scope>
    <source>
        <strain>O157:H7 / Sakai / RIMD 0509952 / EHEC</strain>
    </source>
</reference>
<sequence length="82" mass="9191">MVTIRLARHGAKKRPFYQVVVADSRNARNGRFIERVGFFNPIASEKEEGTRLDLDRIAHWVGQGATISDRVAALIKEVNKAA</sequence>
<evidence type="ECO:0000250" key="1"/>
<evidence type="ECO:0000255" key="2">
    <source>
        <dbReference type="HAMAP-Rule" id="MF_00385"/>
    </source>
</evidence>
<evidence type="ECO:0000305" key="3"/>
<comment type="function">
    <text evidence="1">In addition to being a ribosomal protein, S16 also has a cation-dependent endonuclease activity.</text>
</comment>
<comment type="similarity">
    <text evidence="2">Belongs to the bacterial ribosomal protein bS16 family.</text>
</comment>
<accession>P0A7T5</accession>
<accession>P02372</accession>
<accession>P77006</accession>
<proteinExistence type="inferred from homology"/>
<organism>
    <name type="scientific">Escherichia coli O157:H7</name>
    <dbReference type="NCBI Taxonomy" id="83334"/>
    <lineage>
        <taxon>Bacteria</taxon>
        <taxon>Pseudomonadati</taxon>
        <taxon>Pseudomonadota</taxon>
        <taxon>Gammaproteobacteria</taxon>
        <taxon>Enterobacterales</taxon>
        <taxon>Enterobacteriaceae</taxon>
        <taxon>Escherichia</taxon>
    </lineage>
</organism>
<protein>
    <recommendedName>
        <fullName evidence="2">Small ribosomal subunit protein bS16</fullName>
    </recommendedName>
    <alternativeName>
        <fullName evidence="3">30S ribosomal protein S16</fullName>
    </alternativeName>
</protein>
<keyword id="KW-0255">Endonuclease</keyword>
<keyword id="KW-0378">Hydrolase</keyword>
<keyword id="KW-0540">Nuclease</keyword>
<keyword id="KW-1185">Reference proteome</keyword>
<keyword id="KW-0687">Ribonucleoprotein</keyword>
<keyword id="KW-0689">Ribosomal protein</keyword>
<gene>
    <name evidence="2" type="primary">rpsP</name>
    <name type="ordered locus">Z3903</name>
    <name type="ordered locus">ECs3472</name>
</gene>
<dbReference type="EMBL" id="AE005174">
    <property type="protein sequence ID" value="AAG57720.1"/>
    <property type="molecule type" value="Genomic_DNA"/>
</dbReference>
<dbReference type="EMBL" id="BA000007">
    <property type="protein sequence ID" value="BAB36895.1"/>
    <property type="molecule type" value="Genomic_DNA"/>
</dbReference>
<dbReference type="PIR" id="D85907">
    <property type="entry name" value="D85907"/>
</dbReference>
<dbReference type="PIR" id="H91062">
    <property type="entry name" value="H91062"/>
</dbReference>
<dbReference type="RefSeq" id="NP_311499.1">
    <property type="nucleotide sequence ID" value="NC_002695.1"/>
</dbReference>
<dbReference type="RefSeq" id="WP_000256450.1">
    <property type="nucleotide sequence ID" value="NZ_VOAI01000040.1"/>
</dbReference>
<dbReference type="SMR" id="P0A7T5"/>
<dbReference type="STRING" id="155864.Z3903"/>
<dbReference type="GeneID" id="914816"/>
<dbReference type="GeneID" id="93774459"/>
<dbReference type="KEGG" id="ece:Z3903"/>
<dbReference type="KEGG" id="ecs:ECs_3472"/>
<dbReference type="PATRIC" id="fig|386585.9.peg.3626"/>
<dbReference type="eggNOG" id="COG0228">
    <property type="taxonomic scope" value="Bacteria"/>
</dbReference>
<dbReference type="HOGENOM" id="CLU_100590_5_1_6"/>
<dbReference type="OMA" id="GFYNPIA"/>
<dbReference type="Proteomes" id="UP000000558">
    <property type="component" value="Chromosome"/>
</dbReference>
<dbReference type="Proteomes" id="UP000002519">
    <property type="component" value="Chromosome"/>
</dbReference>
<dbReference type="GO" id="GO:0005737">
    <property type="term" value="C:cytoplasm"/>
    <property type="evidence" value="ECO:0007669"/>
    <property type="project" value="UniProtKB-ARBA"/>
</dbReference>
<dbReference type="GO" id="GO:0015935">
    <property type="term" value="C:small ribosomal subunit"/>
    <property type="evidence" value="ECO:0007669"/>
    <property type="project" value="TreeGrafter"/>
</dbReference>
<dbReference type="GO" id="GO:0004519">
    <property type="term" value="F:endonuclease activity"/>
    <property type="evidence" value="ECO:0007669"/>
    <property type="project" value="UniProtKB-KW"/>
</dbReference>
<dbReference type="GO" id="GO:0003735">
    <property type="term" value="F:structural constituent of ribosome"/>
    <property type="evidence" value="ECO:0007669"/>
    <property type="project" value="InterPro"/>
</dbReference>
<dbReference type="GO" id="GO:0006412">
    <property type="term" value="P:translation"/>
    <property type="evidence" value="ECO:0007669"/>
    <property type="project" value="UniProtKB-UniRule"/>
</dbReference>
<dbReference type="FunFam" id="3.30.1320.10:FF:000001">
    <property type="entry name" value="30S ribosomal protein S16"/>
    <property type="match status" value="1"/>
</dbReference>
<dbReference type="Gene3D" id="3.30.1320.10">
    <property type="match status" value="1"/>
</dbReference>
<dbReference type="HAMAP" id="MF_00385">
    <property type="entry name" value="Ribosomal_bS16"/>
    <property type="match status" value="1"/>
</dbReference>
<dbReference type="InterPro" id="IPR000307">
    <property type="entry name" value="Ribosomal_bS16"/>
</dbReference>
<dbReference type="InterPro" id="IPR020592">
    <property type="entry name" value="Ribosomal_bS16_CS"/>
</dbReference>
<dbReference type="InterPro" id="IPR023803">
    <property type="entry name" value="Ribosomal_bS16_dom_sf"/>
</dbReference>
<dbReference type="NCBIfam" id="TIGR00002">
    <property type="entry name" value="S16"/>
    <property type="match status" value="1"/>
</dbReference>
<dbReference type="PANTHER" id="PTHR12919">
    <property type="entry name" value="30S RIBOSOMAL PROTEIN S16"/>
    <property type="match status" value="1"/>
</dbReference>
<dbReference type="PANTHER" id="PTHR12919:SF20">
    <property type="entry name" value="SMALL RIBOSOMAL SUBUNIT PROTEIN BS16M"/>
    <property type="match status" value="1"/>
</dbReference>
<dbReference type="Pfam" id="PF00886">
    <property type="entry name" value="Ribosomal_S16"/>
    <property type="match status" value="1"/>
</dbReference>
<dbReference type="SUPFAM" id="SSF54565">
    <property type="entry name" value="Ribosomal protein S16"/>
    <property type="match status" value="1"/>
</dbReference>
<dbReference type="PROSITE" id="PS00732">
    <property type="entry name" value="RIBOSOMAL_S16"/>
    <property type="match status" value="1"/>
</dbReference>
<feature type="chain" id="PRO_0000167186" description="Small ribosomal subunit protein bS16">
    <location>
        <begin position="1"/>
        <end position="82"/>
    </location>
</feature>